<reference key="1">
    <citation type="submission" date="2007-04" db="EMBL/GenBank/DDBJ databases">
        <title>Complete sequence of Roseiflexus sp. RS-1.</title>
        <authorList>
            <consortium name="US DOE Joint Genome Institute"/>
            <person name="Copeland A."/>
            <person name="Lucas S."/>
            <person name="Lapidus A."/>
            <person name="Barry K."/>
            <person name="Detter J.C."/>
            <person name="Glavina del Rio T."/>
            <person name="Hammon N."/>
            <person name="Israni S."/>
            <person name="Dalin E."/>
            <person name="Tice H."/>
            <person name="Pitluck S."/>
            <person name="Chertkov O."/>
            <person name="Brettin T."/>
            <person name="Bruce D."/>
            <person name="Han C."/>
            <person name="Schmutz J."/>
            <person name="Larimer F."/>
            <person name="Land M."/>
            <person name="Hauser L."/>
            <person name="Kyrpides N."/>
            <person name="Mikhailova N."/>
            <person name="Bryant D.A."/>
            <person name="Richardson P."/>
        </authorList>
    </citation>
    <scope>NUCLEOTIDE SEQUENCE [LARGE SCALE GENOMIC DNA]</scope>
    <source>
        <strain>RS-1</strain>
    </source>
</reference>
<feature type="chain" id="PRO_0000345537" description="Small ribosomal subunit protein bS18A">
    <location>
        <begin position="1"/>
        <end position="88"/>
    </location>
</feature>
<gene>
    <name evidence="1" type="primary">rpsR1</name>
    <name type="ordered locus">RoseRS_0600</name>
</gene>
<sequence>MTYQDGSRRMRGRGGRKKVCEFSRLGILPDYKDPERLKRFLGPTGKILPRRRTGLSAKMQRKLTIAIKRARHMALLPFVERSITDRRR</sequence>
<dbReference type="EMBL" id="CP000686">
    <property type="protein sequence ID" value="ABQ89022.1"/>
    <property type="molecule type" value="Genomic_DNA"/>
</dbReference>
<dbReference type="RefSeq" id="WP_011955378.1">
    <property type="nucleotide sequence ID" value="NC_009523.1"/>
</dbReference>
<dbReference type="SMR" id="A5UQW9"/>
<dbReference type="STRING" id="357808.RoseRS_0600"/>
<dbReference type="KEGG" id="rrs:RoseRS_0600"/>
<dbReference type="eggNOG" id="COG0238">
    <property type="taxonomic scope" value="Bacteria"/>
</dbReference>
<dbReference type="HOGENOM" id="CLU_148710_0_3_0"/>
<dbReference type="OrthoDB" id="9812008at2"/>
<dbReference type="Proteomes" id="UP000006554">
    <property type="component" value="Chromosome"/>
</dbReference>
<dbReference type="GO" id="GO:0022627">
    <property type="term" value="C:cytosolic small ribosomal subunit"/>
    <property type="evidence" value="ECO:0007669"/>
    <property type="project" value="TreeGrafter"/>
</dbReference>
<dbReference type="GO" id="GO:0070181">
    <property type="term" value="F:small ribosomal subunit rRNA binding"/>
    <property type="evidence" value="ECO:0007669"/>
    <property type="project" value="TreeGrafter"/>
</dbReference>
<dbReference type="GO" id="GO:0003735">
    <property type="term" value="F:structural constituent of ribosome"/>
    <property type="evidence" value="ECO:0007669"/>
    <property type="project" value="InterPro"/>
</dbReference>
<dbReference type="GO" id="GO:0006412">
    <property type="term" value="P:translation"/>
    <property type="evidence" value="ECO:0007669"/>
    <property type="project" value="UniProtKB-UniRule"/>
</dbReference>
<dbReference type="Gene3D" id="4.10.640.10">
    <property type="entry name" value="Ribosomal protein S18"/>
    <property type="match status" value="1"/>
</dbReference>
<dbReference type="HAMAP" id="MF_00270">
    <property type="entry name" value="Ribosomal_bS18"/>
    <property type="match status" value="1"/>
</dbReference>
<dbReference type="InterPro" id="IPR001648">
    <property type="entry name" value="Ribosomal_bS18"/>
</dbReference>
<dbReference type="InterPro" id="IPR018275">
    <property type="entry name" value="Ribosomal_bS18_CS"/>
</dbReference>
<dbReference type="InterPro" id="IPR036870">
    <property type="entry name" value="Ribosomal_bS18_sf"/>
</dbReference>
<dbReference type="NCBIfam" id="TIGR00165">
    <property type="entry name" value="S18"/>
    <property type="match status" value="1"/>
</dbReference>
<dbReference type="PANTHER" id="PTHR13479">
    <property type="entry name" value="30S RIBOSOMAL PROTEIN S18"/>
    <property type="match status" value="1"/>
</dbReference>
<dbReference type="PANTHER" id="PTHR13479:SF40">
    <property type="entry name" value="SMALL RIBOSOMAL SUBUNIT PROTEIN BS18M"/>
    <property type="match status" value="1"/>
</dbReference>
<dbReference type="Pfam" id="PF01084">
    <property type="entry name" value="Ribosomal_S18"/>
    <property type="match status" value="1"/>
</dbReference>
<dbReference type="PRINTS" id="PR00974">
    <property type="entry name" value="RIBOSOMALS18"/>
</dbReference>
<dbReference type="SUPFAM" id="SSF46911">
    <property type="entry name" value="Ribosomal protein S18"/>
    <property type="match status" value="1"/>
</dbReference>
<dbReference type="PROSITE" id="PS00057">
    <property type="entry name" value="RIBOSOMAL_S18"/>
    <property type="match status" value="1"/>
</dbReference>
<keyword id="KW-0687">Ribonucleoprotein</keyword>
<keyword id="KW-0689">Ribosomal protein</keyword>
<keyword id="KW-0694">RNA-binding</keyword>
<keyword id="KW-0699">rRNA-binding</keyword>
<accession>A5UQW9</accession>
<organism>
    <name type="scientific">Roseiflexus sp. (strain RS-1)</name>
    <dbReference type="NCBI Taxonomy" id="357808"/>
    <lineage>
        <taxon>Bacteria</taxon>
        <taxon>Bacillati</taxon>
        <taxon>Chloroflexota</taxon>
        <taxon>Chloroflexia</taxon>
        <taxon>Chloroflexales</taxon>
        <taxon>Roseiflexineae</taxon>
        <taxon>Roseiflexaceae</taxon>
        <taxon>Roseiflexus</taxon>
    </lineage>
</organism>
<protein>
    <recommendedName>
        <fullName evidence="1">Small ribosomal subunit protein bS18A</fullName>
    </recommendedName>
    <alternativeName>
        <fullName evidence="2">30S ribosomal protein S18 1</fullName>
    </alternativeName>
</protein>
<comment type="function">
    <text evidence="1">Binds as a heterodimer with protein bS6 to the central domain of the 16S rRNA, where it helps stabilize the platform of the 30S subunit.</text>
</comment>
<comment type="subunit">
    <text evidence="1">Part of the 30S ribosomal subunit. Forms a tight heterodimer with protein bS6.</text>
</comment>
<comment type="similarity">
    <text evidence="1">Belongs to the bacterial ribosomal protein bS18 family.</text>
</comment>
<name>RS181_ROSS1</name>
<evidence type="ECO:0000255" key="1">
    <source>
        <dbReference type="HAMAP-Rule" id="MF_00270"/>
    </source>
</evidence>
<evidence type="ECO:0000305" key="2"/>
<proteinExistence type="inferred from homology"/>